<gene>
    <name evidence="1" type="primary">atpG</name>
    <name type="ordered locus">ZMO0240</name>
</gene>
<dbReference type="EMBL" id="AE008692">
    <property type="protein sequence ID" value="AAV88864.1"/>
    <property type="molecule type" value="Genomic_DNA"/>
</dbReference>
<dbReference type="RefSeq" id="WP_011240185.1">
    <property type="nucleotide sequence ID" value="NZ_CP035711.1"/>
</dbReference>
<dbReference type="SMR" id="Q5NQZ0"/>
<dbReference type="STRING" id="264203.ZMO0240"/>
<dbReference type="KEGG" id="zmo:ZMO0240"/>
<dbReference type="eggNOG" id="COG0224">
    <property type="taxonomic scope" value="Bacteria"/>
</dbReference>
<dbReference type="HOGENOM" id="CLU_050669_0_1_5"/>
<dbReference type="Proteomes" id="UP000001173">
    <property type="component" value="Chromosome"/>
</dbReference>
<dbReference type="GO" id="GO:0005886">
    <property type="term" value="C:plasma membrane"/>
    <property type="evidence" value="ECO:0007669"/>
    <property type="project" value="UniProtKB-SubCell"/>
</dbReference>
<dbReference type="GO" id="GO:0045259">
    <property type="term" value="C:proton-transporting ATP synthase complex"/>
    <property type="evidence" value="ECO:0007669"/>
    <property type="project" value="UniProtKB-KW"/>
</dbReference>
<dbReference type="GO" id="GO:0005524">
    <property type="term" value="F:ATP binding"/>
    <property type="evidence" value="ECO:0007669"/>
    <property type="project" value="UniProtKB-UniRule"/>
</dbReference>
<dbReference type="GO" id="GO:0046933">
    <property type="term" value="F:proton-transporting ATP synthase activity, rotational mechanism"/>
    <property type="evidence" value="ECO:0007669"/>
    <property type="project" value="UniProtKB-UniRule"/>
</dbReference>
<dbReference type="GO" id="GO:0042777">
    <property type="term" value="P:proton motive force-driven plasma membrane ATP synthesis"/>
    <property type="evidence" value="ECO:0007669"/>
    <property type="project" value="UniProtKB-UniRule"/>
</dbReference>
<dbReference type="CDD" id="cd12151">
    <property type="entry name" value="F1-ATPase_gamma"/>
    <property type="match status" value="1"/>
</dbReference>
<dbReference type="FunFam" id="1.10.287.80:FF:000001">
    <property type="entry name" value="ATP synthase gamma chain"/>
    <property type="match status" value="1"/>
</dbReference>
<dbReference type="Gene3D" id="3.40.1380.10">
    <property type="match status" value="1"/>
</dbReference>
<dbReference type="Gene3D" id="1.10.287.80">
    <property type="entry name" value="ATP synthase, gamma subunit, helix hairpin domain"/>
    <property type="match status" value="1"/>
</dbReference>
<dbReference type="HAMAP" id="MF_00815">
    <property type="entry name" value="ATP_synth_gamma_bact"/>
    <property type="match status" value="1"/>
</dbReference>
<dbReference type="InterPro" id="IPR035968">
    <property type="entry name" value="ATP_synth_F1_ATPase_gsu"/>
</dbReference>
<dbReference type="InterPro" id="IPR000131">
    <property type="entry name" value="ATP_synth_F1_gsu"/>
</dbReference>
<dbReference type="InterPro" id="IPR023632">
    <property type="entry name" value="ATP_synth_F1_gsu_CS"/>
</dbReference>
<dbReference type="NCBIfam" id="TIGR01146">
    <property type="entry name" value="ATPsyn_F1gamma"/>
    <property type="match status" value="1"/>
</dbReference>
<dbReference type="NCBIfam" id="NF004146">
    <property type="entry name" value="PRK05621.1-4"/>
    <property type="match status" value="1"/>
</dbReference>
<dbReference type="PANTHER" id="PTHR11693">
    <property type="entry name" value="ATP SYNTHASE GAMMA CHAIN"/>
    <property type="match status" value="1"/>
</dbReference>
<dbReference type="PANTHER" id="PTHR11693:SF22">
    <property type="entry name" value="ATP SYNTHASE SUBUNIT GAMMA, MITOCHONDRIAL"/>
    <property type="match status" value="1"/>
</dbReference>
<dbReference type="Pfam" id="PF00231">
    <property type="entry name" value="ATP-synt"/>
    <property type="match status" value="1"/>
</dbReference>
<dbReference type="PIRSF" id="PIRSF039089">
    <property type="entry name" value="ATP_synthase_gamma"/>
    <property type="match status" value="1"/>
</dbReference>
<dbReference type="PRINTS" id="PR00126">
    <property type="entry name" value="ATPASEGAMMA"/>
</dbReference>
<dbReference type="SUPFAM" id="SSF52943">
    <property type="entry name" value="ATP synthase (F1-ATPase), gamma subunit"/>
    <property type="match status" value="1"/>
</dbReference>
<dbReference type="PROSITE" id="PS00153">
    <property type="entry name" value="ATPASE_GAMMA"/>
    <property type="match status" value="1"/>
</dbReference>
<proteinExistence type="inferred from homology"/>
<sequence length="298" mass="32347">MPSLKSLKTRVSSIKSISKITRAMQMVASAKLRRAESRLAAARPYAKRMAQVMSLLAARAAGTPNALPLLNGRGKDQTHLLIVTSSDAGLCGGFNSNIYRQARDRALALEAAGKTVQFYVIGIKNAPVIRNNFPGKTIHETKREETSPVTFENAQKIAQDLIQRFNAGEFDVAHLFFSHYHSVLSQVPTETQIIPAAPEGDDTKNQAAANDASSGAIEFEPDEETILSTLLPRSIAVAIYQAMLENATSEQGSRMSAMENSTRNAGEMISKLSIQYNRLRQAAITTELVEIISGAEAL</sequence>
<reference key="1">
    <citation type="journal article" date="2005" name="Nat. Biotechnol.">
        <title>The genome sequence of the ethanologenic bacterium Zymomonas mobilis ZM4.</title>
        <authorList>
            <person name="Seo J.-S."/>
            <person name="Chong H."/>
            <person name="Park H.S."/>
            <person name="Yoon K.-O."/>
            <person name="Jung C."/>
            <person name="Kim J.J."/>
            <person name="Hong J.H."/>
            <person name="Kim H."/>
            <person name="Kim J.-H."/>
            <person name="Kil J.-I."/>
            <person name="Park C.J."/>
            <person name="Oh H.-M."/>
            <person name="Lee J.-S."/>
            <person name="Jin S.-J."/>
            <person name="Um H.-W."/>
            <person name="Lee H.-J."/>
            <person name="Oh S.-J."/>
            <person name="Kim J.Y."/>
            <person name="Kang H.L."/>
            <person name="Lee S.Y."/>
            <person name="Lee K.J."/>
            <person name="Kang H.S."/>
        </authorList>
    </citation>
    <scope>NUCLEOTIDE SEQUENCE [LARGE SCALE GENOMIC DNA]</scope>
    <source>
        <strain>ATCC 31821 / ZM4 / CP4</strain>
    </source>
</reference>
<accession>Q5NQZ0</accession>
<keyword id="KW-0066">ATP synthesis</keyword>
<keyword id="KW-0997">Cell inner membrane</keyword>
<keyword id="KW-1003">Cell membrane</keyword>
<keyword id="KW-0139">CF(1)</keyword>
<keyword id="KW-0375">Hydrogen ion transport</keyword>
<keyword id="KW-0406">Ion transport</keyword>
<keyword id="KW-0472">Membrane</keyword>
<keyword id="KW-1185">Reference proteome</keyword>
<keyword id="KW-0813">Transport</keyword>
<evidence type="ECO:0000255" key="1">
    <source>
        <dbReference type="HAMAP-Rule" id="MF_00815"/>
    </source>
</evidence>
<organism>
    <name type="scientific">Zymomonas mobilis subsp. mobilis (strain ATCC 31821 / ZM4 / CP4)</name>
    <dbReference type="NCBI Taxonomy" id="264203"/>
    <lineage>
        <taxon>Bacteria</taxon>
        <taxon>Pseudomonadati</taxon>
        <taxon>Pseudomonadota</taxon>
        <taxon>Alphaproteobacteria</taxon>
        <taxon>Sphingomonadales</taxon>
        <taxon>Zymomonadaceae</taxon>
        <taxon>Zymomonas</taxon>
    </lineage>
</organism>
<name>ATPG_ZYMMO</name>
<protein>
    <recommendedName>
        <fullName evidence="1">ATP synthase gamma chain</fullName>
    </recommendedName>
    <alternativeName>
        <fullName evidence="1">ATP synthase F1 sector gamma subunit</fullName>
    </alternativeName>
    <alternativeName>
        <fullName evidence="1">F-ATPase gamma subunit</fullName>
    </alternativeName>
</protein>
<feature type="chain" id="PRO_0000073428" description="ATP synthase gamma chain">
    <location>
        <begin position="1"/>
        <end position="298"/>
    </location>
</feature>
<comment type="function">
    <text evidence="1">Produces ATP from ADP in the presence of a proton gradient across the membrane. The gamma chain is believed to be important in regulating ATPase activity and the flow of protons through the CF(0) complex.</text>
</comment>
<comment type="subunit">
    <text evidence="1">F-type ATPases have 2 components, CF(1) - the catalytic core - and CF(0) - the membrane proton channel. CF(1) has five subunits: alpha(3), beta(3), gamma(1), delta(1), epsilon(1). CF(0) has three main subunits: a, b and c.</text>
</comment>
<comment type="subcellular location">
    <subcellularLocation>
        <location evidence="1">Cell inner membrane</location>
        <topology evidence="1">Peripheral membrane protein</topology>
    </subcellularLocation>
</comment>
<comment type="similarity">
    <text evidence="1">Belongs to the ATPase gamma chain family.</text>
</comment>